<accession>O48412</accession>
<dbReference type="EMBL" id="AF031901">
    <property type="protein sequence ID" value="AAC29027.1"/>
    <property type="molecule type" value="Genomic_DNA"/>
</dbReference>
<dbReference type="RefSeq" id="YP_002300304.1">
    <property type="nucleotide sequence ID" value="NC_011421.1"/>
</dbReference>
<dbReference type="SMR" id="O48412"/>
<dbReference type="GeneID" id="7009017"/>
<dbReference type="KEGG" id="vg:7009017"/>
<sequence>MTLAGYRVDSCNGCGKAYLVGESHDRKKCAECASK</sequence>
<organism>
    <name type="scientific">Bacillus phage SP01</name>
    <name type="common">Bacteriophage SP01</name>
    <dbReference type="NCBI Taxonomy" id="2884427"/>
    <lineage>
        <taxon>Viruses</taxon>
        <taxon>Duplodnaviria</taxon>
        <taxon>Heunggongvirae</taxon>
        <taxon>Uroviricota</taxon>
        <taxon>Caudoviricetes</taxon>
        <taxon>Herelleviridae</taxon>
        <taxon>Spounavirinae</taxon>
        <taxon>Okubovirus</taxon>
        <taxon>Okubovirus SPO1</taxon>
    </lineage>
</organism>
<feature type="chain" id="PRO_0000106164" description="Putative gene 58 protein">
    <location>
        <begin position="1"/>
        <end position="35"/>
    </location>
</feature>
<gene>
    <name type="primary">58</name>
</gene>
<reference key="1">
    <citation type="journal article" date="1998" name="Virology">
        <title>Genes and regulatory sites of the 'host-takeover module' in the terminal redundancy of Bacillus subtilis bacteriophage SPO1.</title>
        <authorList>
            <person name="Stewart C.R."/>
            <person name="Gaslightwala I."/>
            <person name="Hinata K."/>
            <person name="Krolikowski K.A."/>
            <person name="Needleman D.S."/>
            <person name="Peng A.S.-Y."/>
            <person name="Peterman M.A."/>
            <person name="Tobias A."/>
            <person name="Wei P."/>
        </authorList>
    </citation>
    <scope>NUCLEOTIDE SEQUENCE [GENOMIC DNA]</scope>
</reference>
<organismHost>
    <name type="scientific">Bacillus subtilis</name>
    <dbReference type="NCBI Taxonomy" id="1423"/>
</organismHost>
<protein>
    <recommendedName>
        <fullName>Putative gene 58 protein</fullName>
    </recommendedName>
</protein>
<name>GP58_BPSP1</name>
<proteinExistence type="predicted"/>